<accession>Q6W8P9</accession>
<protein>
    <recommendedName>
        <fullName>Aldo-keto reductase family 1 member C23-like protein</fullName>
        <ecNumber>1.1.1.-</ecNumber>
    </recommendedName>
    <alternativeName>
        <fullName>Putative prostaglandin F synthase</fullName>
    </alternativeName>
</protein>
<proteinExistence type="evidence at protein level"/>
<feature type="chain" id="PRO_0000326225" description="Aldo-keto reductase family 1 member C23-like protein">
    <location>
        <begin position="1"/>
        <end position="323"/>
    </location>
</feature>
<feature type="active site" description="Proton donor" evidence="1">
    <location>
        <position position="55"/>
    </location>
</feature>
<feature type="binding site" evidence="1">
    <location>
        <begin position="20"/>
        <end position="24"/>
    </location>
    <ligand>
        <name>NADP(+)</name>
        <dbReference type="ChEBI" id="CHEBI:58349"/>
    </ligand>
</feature>
<feature type="binding site" evidence="1">
    <location>
        <position position="31"/>
    </location>
    <ligand>
        <name>substrate</name>
    </ligand>
</feature>
<feature type="binding site" evidence="1">
    <location>
        <position position="50"/>
    </location>
    <ligand>
        <name>NADP(+)</name>
        <dbReference type="ChEBI" id="CHEBI:58349"/>
    </ligand>
</feature>
<feature type="binding site" evidence="1">
    <location>
        <position position="117"/>
    </location>
    <ligand>
        <name>substrate</name>
    </ligand>
</feature>
<feature type="binding site" evidence="1">
    <location>
        <begin position="166"/>
        <end position="167"/>
    </location>
    <ligand>
        <name>NADP(+)</name>
        <dbReference type="ChEBI" id="CHEBI:58349"/>
    </ligand>
</feature>
<feature type="binding site" evidence="1">
    <location>
        <position position="190"/>
    </location>
    <ligand>
        <name>NADP(+)</name>
        <dbReference type="ChEBI" id="CHEBI:58349"/>
    </ligand>
</feature>
<feature type="binding site" evidence="1">
    <location>
        <begin position="216"/>
        <end position="222"/>
    </location>
    <ligand>
        <name>NADP(+)</name>
        <dbReference type="ChEBI" id="CHEBI:58349"/>
    </ligand>
</feature>
<feature type="binding site" evidence="1">
    <location>
        <begin position="270"/>
        <end position="280"/>
    </location>
    <ligand>
        <name>NADP(+)</name>
        <dbReference type="ChEBI" id="CHEBI:58349"/>
    </ligand>
</feature>
<feature type="site" description="Lowers pKa of active site Tyr" evidence="1">
    <location>
        <position position="84"/>
    </location>
</feature>
<dbReference type="EC" id="1.1.1.-"/>
<dbReference type="EMBL" id="AY304536">
    <property type="protein sequence ID" value="AAP69945.1"/>
    <property type="molecule type" value="mRNA"/>
</dbReference>
<dbReference type="RefSeq" id="NP_001075364.1">
    <property type="nucleotide sequence ID" value="NM_001081895.2"/>
</dbReference>
<dbReference type="RefSeq" id="XP_005606884.2">
    <property type="nucleotide sequence ID" value="XM_005606827.4"/>
</dbReference>
<dbReference type="RefSeq" id="XP_070110747.1">
    <property type="nucleotide sequence ID" value="XM_070254646.1"/>
</dbReference>
<dbReference type="SMR" id="Q6W8P9"/>
<dbReference type="FunCoup" id="Q6W8P9">
    <property type="interactions" value="219"/>
</dbReference>
<dbReference type="STRING" id="9796.ENSECAP00000054910"/>
<dbReference type="GeneID" id="100034026"/>
<dbReference type="KEGG" id="ecb:100034026"/>
<dbReference type="CTD" id="443108"/>
<dbReference type="InParanoid" id="Q6W8P9"/>
<dbReference type="OrthoDB" id="416253at2759"/>
<dbReference type="Proteomes" id="UP000002281">
    <property type="component" value="Unplaced"/>
</dbReference>
<dbReference type="GO" id="GO:0005829">
    <property type="term" value="C:cytosol"/>
    <property type="evidence" value="ECO:0000318"/>
    <property type="project" value="GO_Central"/>
</dbReference>
<dbReference type="GO" id="GO:0004032">
    <property type="term" value="F:aldose reductase (NADPH) activity"/>
    <property type="evidence" value="ECO:0000318"/>
    <property type="project" value="GO_Central"/>
</dbReference>
<dbReference type="GO" id="GO:0047023">
    <property type="term" value="F:androsterone dehydrogenase [NAD(P)+] activity"/>
    <property type="evidence" value="ECO:0000318"/>
    <property type="project" value="GO_Central"/>
</dbReference>
<dbReference type="GO" id="GO:0032052">
    <property type="term" value="F:bile acid binding"/>
    <property type="evidence" value="ECO:0000318"/>
    <property type="project" value="GO_Central"/>
</dbReference>
<dbReference type="GO" id="GO:0047086">
    <property type="term" value="F:ketosteroid monooxygenase activity"/>
    <property type="evidence" value="ECO:0000318"/>
    <property type="project" value="GO_Central"/>
</dbReference>
<dbReference type="GO" id="GO:0044597">
    <property type="term" value="P:daunorubicin metabolic process"/>
    <property type="evidence" value="ECO:0000318"/>
    <property type="project" value="GO_Central"/>
</dbReference>
<dbReference type="GO" id="GO:0044598">
    <property type="term" value="P:doxorubicin metabolic process"/>
    <property type="evidence" value="ECO:0000318"/>
    <property type="project" value="GO_Central"/>
</dbReference>
<dbReference type="GO" id="GO:0042448">
    <property type="term" value="P:progesterone metabolic process"/>
    <property type="evidence" value="ECO:0000318"/>
    <property type="project" value="GO_Central"/>
</dbReference>
<dbReference type="GO" id="GO:0006693">
    <property type="term" value="P:prostaglandin metabolic process"/>
    <property type="evidence" value="ECO:0000318"/>
    <property type="project" value="GO_Central"/>
</dbReference>
<dbReference type="CDD" id="cd19108">
    <property type="entry name" value="AKR_AKR1C1-35"/>
    <property type="match status" value="1"/>
</dbReference>
<dbReference type="FunFam" id="3.20.20.100:FF:000003">
    <property type="entry name" value="Aldo-keto reductase family 1 member C3"/>
    <property type="match status" value="1"/>
</dbReference>
<dbReference type="Gene3D" id="3.20.20.100">
    <property type="entry name" value="NADP-dependent oxidoreductase domain"/>
    <property type="match status" value="1"/>
</dbReference>
<dbReference type="InterPro" id="IPR020471">
    <property type="entry name" value="AKR"/>
</dbReference>
<dbReference type="InterPro" id="IPR044482">
    <property type="entry name" value="AKR1C"/>
</dbReference>
<dbReference type="InterPro" id="IPR018170">
    <property type="entry name" value="Aldo/ket_reductase_CS"/>
</dbReference>
<dbReference type="InterPro" id="IPR023210">
    <property type="entry name" value="NADP_OxRdtase_dom"/>
</dbReference>
<dbReference type="InterPro" id="IPR036812">
    <property type="entry name" value="NADP_OxRdtase_dom_sf"/>
</dbReference>
<dbReference type="PANTHER" id="PTHR11732">
    <property type="entry name" value="ALDO/KETO REDUCTASE"/>
    <property type="match status" value="1"/>
</dbReference>
<dbReference type="Pfam" id="PF00248">
    <property type="entry name" value="Aldo_ket_red"/>
    <property type="match status" value="1"/>
</dbReference>
<dbReference type="PIRSF" id="PIRSF000097">
    <property type="entry name" value="AKR"/>
    <property type="match status" value="1"/>
</dbReference>
<dbReference type="PRINTS" id="PR00069">
    <property type="entry name" value="ALDKETRDTASE"/>
</dbReference>
<dbReference type="SUPFAM" id="SSF51430">
    <property type="entry name" value="NAD(P)-linked oxidoreductase"/>
    <property type="match status" value="1"/>
</dbReference>
<dbReference type="PROSITE" id="PS00798">
    <property type="entry name" value="ALDOKETO_REDUCTASE_1"/>
    <property type="match status" value="1"/>
</dbReference>
<dbReference type="PROSITE" id="PS00062">
    <property type="entry name" value="ALDOKETO_REDUCTASE_2"/>
    <property type="match status" value="1"/>
</dbReference>
<dbReference type="PROSITE" id="PS00063">
    <property type="entry name" value="ALDOKETO_REDUCTASE_3"/>
    <property type="match status" value="1"/>
</dbReference>
<organism>
    <name type="scientific">Equus caballus</name>
    <name type="common">Horse</name>
    <dbReference type="NCBI Taxonomy" id="9796"/>
    <lineage>
        <taxon>Eukaryota</taxon>
        <taxon>Metazoa</taxon>
        <taxon>Chordata</taxon>
        <taxon>Craniata</taxon>
        <taxon>Vertebrata</taxon>
        <taxon>Euteleostomi</taxon>
        <taxon>Mammalia</taxon>
        <taxon>Eutheria</taxon>
        <taxon>Laurasiatheria</taxon>
        <taxon>Perissodactyla</taxon>
        <taxon>Equidae</taxon>
        <taxon>Equus</taxon>
    </lineage>
</organism>
<evidence type="ECO:0000250" key="1"/>
<evidence type="ECO:0000269" key="2">
    <source>
    </source>
</evidence>
<evidence type="ECO:0000305" key="3"/>
<reference key="1">
    <citation type="journal article" date="2004" name="Biol. Reprod.">
        <title>Expression of key prostaglandin synthases in equine endometrium during late diestrus and early pregnancy.</title>
        <authorList>
            <person name="Boerboom D."/>
            <person name="Brown K.A."/>
            <person name="Vaillancourt D."/>
            <person name="Poitras P."/>
            <person name="Goff A.K."/>
            <person name="Watanabe K."/>
            <person name="Dore M."/>
            <person name="Sirois J."/>
        </authorList>
    </citation>
    <scope>NUCLEOTIDE SEQUENCE [MRNA]</scope>
    <scope>TISSUE SPECIFICITY</scope>
    <source>
        <tissue>Ovary</tissue>
    </source>
</reference>
<gene>
    <name type="primary">PGFS</name>
</gene>
<comment type="function">
    <text>NADP-dependent oxidoreductase involved in steroid metabolism. May act on various hydroxysteroids.</text>
</comment>
<comment type="subunit">
    <text evidence="1">Monomer.</text>
</comment>
<comment type="subcellular location">
    <subcellularLocation>
        <location evidence="1">Cytoplasm</location>
    </subcellularLocation>
</comment>
<comment type="tissue specificity">
    <text evidence="2">Detected in endometrium surface epithelium (at protein level). Detected in endometrium.</text>
</comment>
<comment type="similarity">
    <text evidence="3">Belongs to the aldo/keto reductase family.</text>
</comment>
<sequence>MDPKGWCEKLNDGHVIPVLGFGTYAPEEVPKSRTVEVTKLAIDAGFRHIDSAYSYNNEKEVGQAIRSKIEDGTVKREDIFYTSKLWLTFLRPELVRPALEKSLTNLQLDYVDLYIIHFPIALKPGEELFPEDEHGKLIFDTVDLCATWEAMEKCKDAGLAKSIGVSNFNRRQLEMILNKPGLKYKPVCNQVECHPYLNQSKLLDFCKSKDIVLVAYGALGTQRLKRWLAPNSPVLLEDPVLCAMAKKYKRTPALIALRYLLQRGVVVLAKSYNEKRIKENMQVFEFQLTSEDMKDLDGLNRNHRFLPLQIAVDHPEYPFADEY</sequence>
<name>AK1CO_HORSE</name>
<keyword id="KW-0963">Cytoplasm</keyword>
<keyword id="KW-0443">Lipid metabolism</keyword>
<keyword id="KW-0521">NADP</keyword>
<keyword id="KW-0560">Oxidoreductase</keyword>
<keyword id="KW-1185">Reference proteome</keyword>
<keyword id="KW-0753">Steroid metabolism</keyword>